<protein>
    <recommendedName>
        <fullName evidence="1">Peptidyl-tRNA hydrolase</fullName>
        <shortName evidence="1">Pth</shortName>
        <ecNumber evidence="1">3.1.1.29</ecNumber>
    </recommendedName>
</protein>
<accession>P65869</accession>
<accession>Q99WA1</accession>
<gene>
    <name evidence="1" type="primary">pth</name>
    <name type="ordered locus">MW0457</name>
</gene>
<dbReference type="EC" id="3.1.1.29" evidence="1"/>
<dbReference type="EMBL" id="BA000033">
    <property type="protein sequence ID" value="BAB94322.1"/>
    <property type="molecule type" value="Genomic_DNA"/>
</dbReference>
<dbReference type="RefSeq" id="WP_000649791.1">
    <property type="nucleotide sequence ID" value="NC_003923.1"/>
</dbReference>
<dbReference type="SMR" id="P65869"/>
<dbReference type="KEGG" id="sam:MW0457"/>
<dbReference type="HOGENOM" id="CLU_062456_4_1_9"/>
<dbReference type="GO" id="GO:0005737">
    <property type="term" value="C:cytoplasm"/>
    <property type="evidence" value="ECO:0007669"/>
    <property type="project" value="UniProtKB-SubCell"/>
</dbReference>
<dbReference type="GO" id="GO:0004045">
    <property type="term" value="F:peptidyl-tRNA hydrolase activity"/>
    <property type="evidence" value="ECO:0007669"/>
    <property type="project" value="UniProtKB-UniRule"/>
</dbReference>
<dbReference type="GO" id="GO:0000049">
    <property type="term" value="F:tRNA binding"/>
    <property type="evidence" value="ECO:0007669"/>
    <property type="project" value="UniProtKB-UniRule"/>
</dbReference>
<dbReference type="GO" id="GO:0006515">
    <property type="term" value="P:protein quality control for misfolded or incompletely synthesized proteins"/>
    <property type="evidence" value="ECO:0007669"/>
    <property type="project" value="UniProtKB-UniRule"/>
</dbReference>
<dbReference type="GO" id="GO:0072344">
    <property type="term" value="P:rescue of stalled ribosome"/>
    <property type="evidence" value="ECO:0007669"/>
    <property type="project" value="UniProtKB-UniRule"/>
</dbReference>
<dbReference type="CDD" id="cd00462">
    <property type="entry name" value="PTH"/>
    <property type="match status" value="1"/>
</dbReference>
<dbReference type="FunFam" id="3.40.50.1470:FF:000001">
    <property type="entry name" value="Peptidyl-tRNA hydrolase"/>
    <property type="match status" value="1"/>
</dbReference>
<dbReference type="Gene3D" id="3.40.50.1470">
    <property type="entry name" value="Peptidyl-tRNA hydrolase"/>
    <property type="match status" value="1"/>
</dbReference>
<dbReference type="HAMAP" id="MF_00083">
    <property type="entry name" value="Pept_tRNA_hydro_bact"/>
    <property type="match status" value="1"/>
</dbReference>
<dbReference type="InterPro" id="IPR001328">
    <property type="entry name" value="Pept_tRNA_hydro"/>
</dbReference>
<dbReference type="InterPro" id="IPR018171">
    <property type="entry name" value="Pept_tRNA_hydro_CS"/>
</dbReference>
<dbReference type="InterPro" id="IPR036416">
    <property type="entry name" value="Pept_tRNA_hydro_sf"/>
</dbReference>
<dbReference type="NCBIfam" id="TIGR00447">
    <property type="entry name" value="pth"/>
    <property type="match status" value="1"/>
</dbReference>
<dbReference type="PANTHER" id="PTHR17224">
    <property type="entry name" value="PEPTIDYL-TRNA HYDROLASE"/>
    <property type="match status" value="1"/>
</dbReference>
<dbReference type="PANTHER" id="PTHR17224:SF1">
    <property type="entry name" value="PEPTIDYL-TRNA HYDROLASE"/>
    <property type="match status" value="1"/>
</dbReference>
<dbReference type="Pfam" id="PF01195">
    <property type="entry name" value="Pept_tRNA_hydro"/>
    <property type="match status" value="1"/>
</dbReference>
<dbReference type="SUPFAM" id="SSF53178">
    <property type="entry name" value="Peptidyl-tRNA hydrolase-like"/>
    <property type="match status" value="1"/>
</dbReference>
<dbReference type="PROSITE" id="PS01195">
    <property type="entry name" value="PEPT_TRNA_HYDROL_1"/>
    <property type="match status" value="1"/>
</dbReference>
<dbReference type="PROSITE" id="PS01196">
    <property type="entry name" value="PEPT_TRNA_HYDROL_2"/>
    <property type="match status" value="1"/>
</dbReference>
<evidence type="ECO:0000255" key="1">
    <source>
        <dbReference type="HAMAP-Rule" id="MF_00083"/>
    </source>
</evidence>
<organism>
    <name type="scientific">Staphylococcus aureus (strain MW2)</name>
    <dbReference type="NCBI Taxonomy" id="196620"/>
    <lineage>
        <taxon>Bacteria</taxon>
        <taxon>Bacillati</taxon>
        <taxon>Bacillota</taxon>
        <taxon>Bacilli</taxon>
        <taxon>Bacillales</taxon>
        <taxon>Staphylococcaceae</taxon>
        <taxon>Staphylococcus</taxon>
    </lineage>
</organism>
<keyword id="KW-0963">Cytoplasm</keyword>
<keyword id="KW-0378">Hydrolase</keyword>
<keyword id="KW-0694">RNA-binding</keyword>
<keyword id="KW-0820">tRNA-binding</keyword>
<name>PTH_STAAW</name>
<proteinExistence type="inferred from homology"/>
<feature type="chain" id="PRO_0000187820" description="Peptidyl-tRNA hydrolase">
    <location>
        <begin position="1"/>
        <end position="190"/>
    </location>
</feature>
<feature type="active site" description="Proton acceptor" evidence="1">
    <location>
        <position position="19"/>
    </location>
</feature>
<feature type="binding site" evidence="1">
    <location>
        <position position="14"/>
    </location>
    <ligand>
        <name>tRNA</name>
        <dbReference type="ChEBI" id="CHEBI:17843"/>
    </ligand>
</feature>
<feature type="binding site" evidence="1">
    <location>
        <position position="64"/>
    </location>
    <ligand>
        <name>tRNA</name>
        <dbReference type="ChEBI" id="CHEBI:17843"/>
    </ligand>
</feature>
<feature type="binding site" evidence="1">
    <location>
        <position position="66"/>
    </location>
    <ligand>
        <name>tRNA</name>
        <dbReference type="ChEBI" id="CHEBI:17843"/>
    </ligand>
</feature>
<feature type="binding site" evidence="1">
    <location>
        <position position="112"/>
    </location>
    <ligand>
        <name>tRNA</name>
        <dbReference type="ChEBI" id="CHEBI:17843"/>
    </ligand>
</feature>
<feature type="site" description="Discriminates between blocked and unblocked aminoacyl-tRNA" evidence="1">
    <location>
        <position position="9"/>
    </location>
</feature>
<feature type="site" description="Stabilizes the basic form of H active site to accept a proton" evidence="1">
    <location>
        <position position="91"/>
    </location>
</feature>
<reference key="1">
    <citation type="journal article" date="2002" name="Lancet">
        <title>Genome and virulence determinants of high virulence community-acquired MRSA.</title>
        <authorList>
            <person name="Baba T."/>
            <person name="Takeuchi F."/>
            <person name="Kuroda M."/>
            <person name="Yuzawa H."/>
            <person name="Aoki K."/>
            <person name="Oguchi A."/>
            <person name="Nagai Y."/>
            <person name="Iwama N."/>
            <person name="Asano K."/>
            <person name="Naimi T."/>
            <person name="Kuroda H."/>
            <person name="Cui L."/>
            <person name="Yamamoto K."/>
            <person name="Hiramatsu K."/>
        </authorList>
    </citation>
    <scope>NUCLEOTIDE SEQUENCE [LARGE SCALE GENOMIC DNA]</scope>
    <source>
        <strain>MW2</strain>
    </source>
</reference>
<comment type="function">
    <text evidence="1">Hydrolyzes ribosome-free peptidyl-tRNAs (with 1 or more amino acids incorporated), which drop off the ribosome during protein synthesis, or as a result of ribosome stalling.</text>
</comment>
<comment type="function">
    <text evidence="1">Catalyzes the release of premature peptidyl moieties from peptidyl-tRNA molecules trapped in stalled 50S ribosomal subunits, and thus maintains levels of free tRNAs and 50S ribosomes.</text>
</comment>
<comment type="catalytic activity">
    <reaction evidence="1">
        <text>an N-acyl-L-alpha-aminoacyl-tRNA + H2O = an N-acyl-L-amino acid + a tRNA + H(+)</text>
        <dbReference type="Rhea" id="RHEA:54448"/>
        <dbReference type="Rhea" id="RHEA-COMP:10123"/>
        <dbReference type="Rhea" id="RHEA-COMP:13883"/>
        <dbReference type="ChEBI" id="CHEBI:15377"/>
        <dbReference type="ChEBI" id="CHEBI:15378"/>
        <dbReference type="ChEBI" id="CHEBI:59874"/>
        <dbReference type="ChEBI" id="CHEBI:78442"/>
        <dbReference type="ChEBI" id="CHEBI:138191"/>
        <dbReference type="EC" id="3.1.1.29"/>
    </reaction>
</comment>
<comment type="subunit">
    <text evidence="1">Monomer.</text>
</comment>
<comment type="subcellular location">
    <subcellularLocation>
        <location evidence="1">Cytoplasm</location>
    </subcellularLocation>
</comment>
<comment type="similarity">
    <text evidence="1">Belongs to the PTH family.</text>
</comment>
<sequence length="190" mass="21703">MKCIVGLGNIGKRFELTRHNIGFEVVDYILEKNNFSLDKQKFKGAYTIERMNGDKVLFIEPMTMMNLSGEAVAPIMDYYNVNPEDLIVLYDDLDLEQGQVRLRQKGSAGGHNGMKSIIKMLGTDQFKRIRIGVGRPTNGMTVPDYVLQRFSNDEMVTMEKVIEHAARAIEKFVETSRFDHVMNEFNGEVK</sequence>